<name>RL24E_THEVO</name>
<reference key="1">
    <citation type="journal article" date="2000" name="Proc. Natl. Acad. Sci. U.S.A.">
        <title>Archaeal adaptation to higher temperatures revealed by genomic sequence of Thermoplasma volcanium.</title>
        <authorList>
            <person name="Kawashima T."/>
            <person name="Amano N."/>
            <person name="Koike H."/>
            <person name="Makino S."/>
            <person name="Higuchi S."/>
            <person name="Kawashima-Ohya Y."/>
            <person name="Watanabe K."/>
            <person name="Yamazaki M."/>
            <person name="Kanehori K."/>
            <person name="Kawamoto T."/>
            <person name="Nunoshiba T."/>
            <person name="Yamamoto Y."/>
            <person name="Aramaki H."/>
            <person name="Makino K."/>
            <person name="Suzuki M."/>
        </authorList>
    </citation>
    <scope>NUCLEOTIDE SEQUENCE [LARGE SCALE GENOMIC DNA]</scope>
    <source>
        <strain>ATCC 51530 / DSM 4299 / JCM 9571 / NBRC 15438 / GSS1</strain>
    </source>
</reference>
<dbReference type="EMBL" id="BA000011">
    <property type="protein sequence ID" value="BAB59591.1"/>
    <property type="molecule type" value="Genomic_DNA"/>
</dbReference>
<dbReference type="SMR" id="Q97BK6"/>
<dbReference type="STRING" id="273116.gene:9381230"/>
<dbReference type="PaxDb" id="273116-14324664"/>
<dbReference type="KEGG" id="tvo:TVG0437979"/>
<dbReference type="eggNOG" id="arCOG01950">
    <property type="taxonomic scope" value="Archaea"/>
</dbReference>
<dbReference type="HOGENOM" id="CLU_190191_0_0_2"/>
<dbReference type="OrthoDB" id="55506at2157"/>
<dbReference type="PhylomeDB" id="Q97BK6"/>
<dbReference type="Proteomes" id="UP000001017">
    <property type="component" value="Chromosome"/>
</dbReference>
<dbReference type="GO" id="GO:1990904">
    <property type="term" value="C:ribonucleoprotein complex"/>
    <property type="evidence" value="ECO:0007669"/>
    <property type="project" value="UniProtKB-KW"/>
</dbReference>
<dbReference type="GO" id="GO:0005840">
    <property type="term" value="C:ribosome"/>
    <property type="evidence" value="ECO:0007669"/>
    <property type="project" value="UniProtKB-KW"/>
</dbReference>
<dbReference type="GO" id="GO:0019843">
    <property type="term" value="F:rRNA binding"/>
    <property type="evidence" value="ECO:0007669"/>
    <property type="project" value="UniProtKB-UniRule"/>
</dbReference>
<dbReference type="GO" id="GO:0003735">
    <property type="term" value="F:structural constituent of ribosome"/>
    <property type="evidence" value="ECO:0007669"/>
    <property type="project" value="InterPro"/>
</dbReference>
<dbReference type="GO" id="GO:0008270">
    <property type="term" value="F:zinc ion binding"/>
    <property type="evidence" value="ECO:0007669"/>
    <property type="project" value="UniProtKB-UniRule"/>
</dbReference>
<dbReference type="GO" id="GO:0006412">
    <property type="term" value="P:translation"/>
    <property type="evidence" value="ECO:0007669"/>
    <property type="project" value="UniProtKB-UniRule"/>
</dbReference>
<dbReference type="CDD" id="cd00472">
    <property type="entry name" value="Ribosomal_L24e_L24"/>
    <property type="match status" value="1"/>
</dbReference>
<dbReference type="Gene3D" id="2.30.170.20">
    <property type="entry name" value="Ribosomal protein L24e"/>
    <property type="match status" value="1"/>
</dbReference>
<dbReference type="HAMAP" id="MF_00773">
    <property type="entry name" value="Ribosomal_eL24"/>
    <property type="match status" value="1"/>
</dbReference>
<dbReference type="InterPro" id="IPR038630">
    <property type="entry name" value="L24e/L24_sf"/>
</dbReference>
<dbReference type="InterPro" id="IPR056366">
    <property type="entry name" value="Ribosomal_eL24"/>
</dbReference>
<dbReference type="InterPro" id="IPR055345">
    <property type="entry name" value="Ribosomal_eL24-rel_arc"/>
</dbReference>
<dbReference type="InterPro" id="IPR000988">
    <property type="entry name" value="Ribosomal_eL24-rel_N"/>
</dbReference>
<dbReference type="InterPro" id="IPR023442">
    <property type="entry name" value="Ribosomal_eL24_CS"/>
</dbReference>
<dbReference type="InterPro" id="IPR011017">
    <property type="entry name" value="TRASH_dom"/>
</dbReference>
<dbReference type="NCBIfam" id="NF034186">
    <property type="entry name" value="PRK14891.1-1"/>
    <property type="match status" value="1"/>
</dbReference>
<dbReference type="PANTHER" id="PTHR10792">
    <property type="entry name" value="60S RIBOSOMAL PROTEIN L24"/>
    <property type="match status" value="1"/>
</dbReference>
<dbReference type="PANTHER" id="PTHR10792:SF1">
    <property type="entry name" value="RIBOSOMAL PROTEIN L24"/>
    <property type="match status" value="1"/>
</dbReference>
<dbReference type="Pfam" id="PF01246">
    <property type="entry name" value="Ribosomal_L24e"/>
    <property type="match status" value="1"/>
</dbReference>
<dbReference type="SMART" id="SM00746">
    <property type="entry name" value="TRASH"/>
    <property type="match status" value="1"/>
</dbReference>
<dbReference type="SUPFAM" id="SSF57716">
    <property type="entry name" value="Glucocorticoid receptor-like (DNA-binding domain)"/>
    <property type="match status" value="1"/>
</dbReference>
<dbReference type="PROSITE" id="PS01073">
    <property type="entry name" value="RIBOSOMAL_L24E"/>
    <property type="match status" value="1"/>
</dbReference>
<gene>
    <name evidence="1" type="primary">rpl24e</name>
    <name type="ordered locus">TV0449</name>
    <name type="ORF">TVG0437979</name>
</gene>
<protein>
    <recommendedName>
        <fullName evidence="1">Large ribosomal subunit protein eL24</fullName>
    </recommendedName>
    <alternativeName>
        <fullName evidence="2">50S ribosomal protein L24e</fullName>
    </alternativeName>
</protein>
<keyword id="KW-0479">Metal-binding</keyword>
<keyword id="KW-0687">Ribonucleoprotein</keyword>
<keyword id="KW-0689">Ribosomal protein</keyword>
<keyword id="KW-0694">RNA-binding</keyword>
<keyword id="KW-0699">rRNA-binding</keyword>
<keyword id="KW-0862">Zinc</keyword>
<keyword id="KW-0863">Zinc-finger</keyword>
<comment type="function">
    <text evidence="1">Binds to the 23S rRNA.</text>
</comment>
<comment type="cofactor">
    <cofactor evidence="1">
        <name>Zn(2+)</name>
        <dbReference type="ChEBI" id="CHEBI:29105"/>
    </cofactor>
    <text evidence="1">Binds 1 zinc ion per subunit.</text>
</comment>
<comment type="subunit">
    <text evidence="1">Part of the 50S ribosomal subunit. Forms a cluster with proteins L3 and L14.</text>
</comment>
<comment type="similarity">
    <text evidence="1">Belongs to the eukaryotic ribosomal protein eL24 family.</text>
</comment>
<proteinExistence type="inferred from homology"/>
<sequence>MLARTCSFCGKTIEPGTGIMYVRKDGAILYFCSNKCKKNMIGLNRVPRYVRWTNEYHELKKMRTRS</sequence>
<evidence type="ECO:0000255" key="1">
    <source>
        <dbReference type="HAMAP-Rule" id="MF_00773"/>
    </source>
</evidence>
<evidence type="ECO:0000305" key="2"/>
<organism>
    <name type="scientific">Thermoplasma volcanium (strain ATCC 51530 / DSM 4299 / JCM 9571 / NBRC 15438 / GSS1)</name>
    <dbReference type="NCBI Taxonomy" id="273116"/>
    <lineage>
        <taxon>Archaea</taxon>
        <taxon>Methanobacteriati</taxon>
        <taxon>Thermoplasmatota</taxon>
        <taxon>Thermoplasmata</taxon>
        <taxon>Thermoplasmatales</taxon>
        <taxon>Thermoplasmataceae</taxon>
        <taxon>Thermoplasma</taxon>
    </lineage>
</organism>
<accession>Q97BK6</accession>
<feature type="chain" id="PRO_0000136931" description="Large ribosomal subunit protein eL24">
    <location>
        <begin position="1"/>
        <end position="66"/>
    </location>
</feature>
<feature type="zinc finger region" description="C4-type" evidence="1">
    <location>
        <begin position="6"/>
        <end position="36"/>
    </location>
</feature>
<feature type="binding site" evidence="1">
    <location>
        <position position="6"/>
    </location>
    <ligand>
        <name>Zn(2+)</name>
        <dbReference type="ChEBI" id="CHEBI:29105"/>
    </ligand>
</feature>
<feature type="binding site" evidence="1">
    <location>
        <position position="9"/>
    </location>
    <ligand>
        <name>Zn(2+)</name>
        <dbReference type="ChEBI" id="CHEBI:29105"/>
    </ligand>
</feature>
<feature type="binding site" evidence="1">
    <location>
        <position position="32"/>
    </location>
    <ligand>
        <name>Zn(2+)</name>
        <dbReference type="ChEBI" id="CHEBI:29105"/>
    </ligand>
</feature>
<feature type="binding site" evidence="1">
    <location>
        <position position="36"/>
    </location>
    <ligand>
        <name>Zn(2+)</name>
        <dbReference type="ChEBI" id="CHEBI:29105"/>
    </ligand>
</feature>